<evidence type="ECO:0000255" key="1">
    <source>
        <dbReference type="HAMAP-Rule" id="MF_01208"/>
    </source>
</evidence>
<comment type="function">
    <text evidence="1">Catalyzes the transfer of a ribosyl phosphate group from 5-phosphoribose 1-diphosphate to orotate, leading to the formation of orotidine monophosphate (OMP).</text>
</comment>
<comment type="catalytic activity">
    <reaction evidence="1">
        <text>orotidine 5'-phosphate + diphosphate = orotate + 5-phospho-alpha-D-ribose 1-diphosphate</text>
        <dbReference type="Rhea" id="RHEA:10380"/>
        <dbReference type="ChEBI" id="CHEBI:30839"/>
        <dbReference type="ChEBI" id="CHEBI:33019"/>
        <dbReference type="ChEBI" id="CHEBI:57538"/>
        <dbReference type="ChEBI" id="CHEBI:58017"/>
        <dbReference type="EC" id="2.4.2.10"/>
    </reaction>
</comment>
<comment type="cofactor">
    <cofactor evidence="1">
        <name>Mg(2+)</name>
        <dbReference type="ChEBI" id="CHEBI:18420"/>
    </cofactor>
</comment>
<comment type="pathway">
    <text evidence="1">Pyrimidine metabolism; UMP biosynthesis via de novo pathway; UMP from orotate: step 1/2.</text>
</comment>
<comment type="subunit">
    <text evidence="1">Homodimer.</text>
</comment>
<comment type="similarity">
    <text evidence="1">Belongs to the purine/pyrimidine phosphoribosyltransferase family. PyrE subfamily.</text>
</comment>
<protein>
    <recommendedName>
        <fullName evidence="1">Orotate phosphoribosyltransferase</fullName>
        <shortName evidence="1">OPRT</shortName>
        <shortName evidence="1">OPRTase</shortName>
        <ecNumber evidence="1">2.4.2.10</ecNumber>
    </recommendedName>
</protein>
<keyword id="KW-0328">Glycosyltransferase</keyword>
<keyword id="KW-0460">Magnesium</keyword>
<keyword id="KW-0665">Pyrimidine biosynthesis</keyword>
<keyword id="KW-0808">Transferase</keyword>
<feature type="chain" id="PRO_1000066329" description="Orotate phosphoribosyltransferase">
    <location>
        <begin position="1"/>
        <end position="215"/>
    </location>
</feature>
<feature type="binding site" description="in other chain" evidence="1">
    <location>
        <position position="26"/>
    </location>
    <ligand>
        <name>5-phospho-alpha-D-ribose 1-diphosphate</name>
        <dbReference type="ChEBI" id="CHEBI:58017"/>
        <note>ligand shared between dimeric partners</note>
    </ligand>
</feature>
<feature type="binding site" evidence="1">
    <location>
        <begin position="34"/>
        <end position="35"/>
    </location>
    <ligand>
        <name>orotate</name>
        <dbReference type="ChEBI" id="CHEBI:30839"/>
    </ligand>
</feature>
<feature type="binding site" description="in other chain" evidence="1">
    <location>
        <begin position="72"/>
        <end position="73"/>
    </location>
    <ligand>
        <name>5-phospho-alpha-D-ribose 1-diphosphate</name>
        <dbReference type="ChEBI" id="CHEBI:58017"/>
        <note>ligand shared between dimeric partners</note>
    </ligand>
</feature>
<feature type="binding site" evidence="1">
    <location>
        <position position="99"/>
    </location>
    <ligand>
        <name>5-phospho-alpha-D-ribose 1-diphosphate</name>
        <dbReference type="ChEBI" id="CHEBI:58017"/>
        <note>ligand shared between dimeric partners</note>
    </ligand>
</feature>
<feature type="binding site" description="in other chain" evidence="1">
    <location>
        <position position="100"/>
    </location>
    <ligand>
        <name>5-phospho-alpha-D-ribose 1-diphosphate</name>
        <dbReference type="ChEBI" id="CHEBI:58017"/>
        <note>ligand shared between dimeric partners</note>
    </ligand>
</feature>
<feature type="binding site" evidence="1">
    <location>
        <position position="103"/>
    </location>
    <ligand>
        <name>5-phospho-alpha-D-ribose 1-diphosphate</name>
        <dbReference type="ChEBI" id="CHEBI:58017"/>
        <note>ligand shared between dimeric partners</note>
    </ligand>
</feature>
<feature type="binding site" evidence="1">
    <location>
        <position position="105"/>
    </location>
    <ligand>
        <name>5-phospho-alpha-D-ribose 1-diphosphate</name>
        <dbReference type="ChEBI" id="CHEBI:58017"/>
        <note>ligand shared between dimeric partners</note>
    </ligand>
</feature>
<feature type="binding site" description="in other chain" evidence="1">
    <location>
        <begin position="124"/>
        <end position="132"/>
    </location>
    <ligand>
        <name>5-phospho-alpha-D-ribose 1-diphosphate</name>
        <dbReference type="ChEBI" id="CHEBI:58017"/>
        <note>ligand shared between dimeric partners</note>
    </ligand>
</feature>
<feature type="binding site" evidence="1">
    <location>
        <position position="128"/>
    </location>
    <ligand>
        <name>orotate</name>
        <dbReference type="ChEBI" id="CHEBI:30839"/>
    </ligand>
</feature>
<feature type="binding site" evidence="1">
    <location>
        <position position="156"/>
    </location>
    <ligand>
        <name>orotate</name>
        <dbReference type="ChEBI" id="CHEBI:30839"/>
    </ligand>
</feature>
<name>PYRE_YERPA</name>
<gene>
    <name evidence="1" type="primary">pyrE</name>
    <name type="ordered locus">YPA_3497</name>
</gene>
<accession>Q1C263</accession>
<reference key="1">
    <citation type="journal article" date="2006" name="J. Bacteriol.">
        <title>Complete genome sequence of Yersinia pestis strains Antiqua and Nepal516: evidence of gene reduction in an emerging pathogen.</title>
        <authorList>
            <person name="Chain P.S.G."/>
            <person name="Hu P."/>
            <person name="Malfatti S.A."/>
            <person name="Radnedge L."/>
            <person name="Larimer F."/>
            <person name="Vergez L.M."/>
            <person name="Worsham P."/>
            <person name="Chu M.C."/>
            <person name="Andersen G.L."/>
        </authorList>
    </citation>
    <scope>NUCLEOTIDE SEQUENCE [LARGE SCALE GENOMIC DNA]</scope>
    <source>
        <strain>Antiqua</strain>
    </source>
</reference>
<organism>
    <name type="scientific">Yersinia pestis bv. Antiqua (strain Antiqua)</name>
    <dbReference type="NCBI Taxonomy" id="360102"/>
    <lineage>
        <taxon>Bacteria</taxon>
        <taxon>Pseudomonadati</taxon>
        <taxon>Pseudomonadota</taxon>
        <taxon>Gammaproteobacteria</taxon>
        <taxon>Enterobacterales</taxon>
        <taxon>Yersiniaceae</taxon>
        <taxon>Yersinia</taxon>
    </lineage>
</organism>
<sequence>MKAYQREFIEFALNKQVLKFGEFTLKSGRISPYFFNAGLFNTGLDLAKLGRFYAAALMDCGVEFDLLFGPAYKGIPIATTTAVALAEHHERDVPYCFNRKEAKTHGEGGNLVGSPLQGRVMLVDDVITAGTAIRESMEIINAQGATLAGVMISLDRQERGRGEISAIQEVERDYHCKVIAIVTLNDVIRYLEDKPEMAEHLVAVRQYREQYGVTL</sequence>
<proteinExistence type="inferred from homology"/>
<dbReference type="EC" id="2.4.2.10" evidence="1"/>
<dbReference type="EMBL" id="CP000308">
    <property type="protein sequence ID" value="ABG15459.1"/>
    <property type="molecule type" value="Genomic_DNA"/>
</dbReference>
<dbReference type="RefSeq" id="WP_002208996.1">
    <property type="nucleotide sequence ID" value="NZ_CP009906.1"/>
</dbReference>
<dbReference type="SMR" id="Q1C263"/>
<dbReference type="GeneID" id="57974545"/>
<dbReference type="KEGG" id="ypa:YPA_3497"/>
<dbReference type="UniPathway" id="UPA00070">
    <property type="reaction ID" value="UER00119"/>
</dbReference>
<dbReference type="Proteomes" id="UP000001971">
    <property type="component" value="Chromosome"/>
</dbReference>
<dbReference type="GO" id="GO:0005737">
    <property type="term" value="C:cytoplasm"/>
    <property type="evidence" value="ECO:0007669"/>
    <property type="project" value="TreeGrafter"/>
</dbReference>
<dbReference type="GO" id="GO:0000287">
    <property type="term" value="F:magnesium ion binding"/>
    <property type="evidence" value="ECO:0007669"/>
    <property type="project" value="UniProtKB-UniRule"/>
</dbReference>
<dbReference type="GO" id="GO:0004588">
    <property type="term" value="F:orotate phosphoribosyltransferase activity"/>
    <property type="evidence" value="ECO:0007669"/>
    <property type="project" value="UniProtKB-UniRule"/>
</dbReference>
<dbReference type="GO" id="GO:0006207">
    <property type="term" value="P:'de novo' pyrimidine nucleobase biosynthetic process"/>
    <property type="evidence" value="ECO:0007669"/>
    <property type="project" value="TreeGrafter"/>
</dbReference>
<dbReference type="GO" id="GO:0044205">
    <property type="term" value="P:'de novo' UMP biosynthetic process"/>
    <property type="evidence" value="ECO:0007669"/>
    <property type="project" value="UniProtKB-UniRule"/>
</dbReference>
<dbReference type="GO" id="GO:0046132">
    <property type="term" value="P:pyrimidine ribonucleoside biosynthetic process"/>
    <property type="evidence" value="ECO:0007669"/>
    <property type="project" value="TreeGrafter"/>
</dbReference>
<dbReference type="CDD" id="cd06223">
    <property type="entry name" value="PRTases_typeI"/>
    <property type="match status" value="1"/>
</dbReference>
<dbReference type="FunFam" id="3.40.50.2020:FF:000008">
    <property type="entry name" value="Orotate phosphoribosyltransferase"/>
    <property type="match status" value="1"/>
</dbReference>
<dbReference type="Gene3D" id="3.40.50.2020">
    <property type="match status" value="1"/>
</dbReference>
<dbReference type="HAMAP" id="MF_01208">
    <property type="entry name" value="PyrE"/>
    <property type="match status" value="1"/>
</dbReference>
<dbReference type="InterPro" id="IPR023031">
    <property type="entry name" value="OPRT"/>
</dbReference>
<dbReference type="InterPro" id="IPR004467">
    <property type="entry name" value="Or_phspho_trans_dom"/>
</dbReference>
<dbReference type="InterPro" id="IPR000836">
    <property type="entry name" value="PRibTrfase_dom"/>
</dbReference>
<dbReference type="InterPro" id="IPR029057">
    <property type="entry name" value="PRTase-like"/>
</dbReference>
<dbReference type="NCBIfam" id="TIGR00336">
    <property type="entry name" value="pyrE"/>
    <property type="match status" value="1"/>
</dbReference>
<dbReference type="PANTHER" id="PTHR46683">
    <property type="entry name" value="OROTATE PHOSPHORIBOSYLTRANSFERASE 1-RELATED"/>
    <property type="match status" value="1"/>
</dbReference>
<dbReference type="PANTHER" id="PTHR46683:SF1">
    <property type="entry name" value="OROTATE PHOSPHORIBOSYLTRANSFERASE 1-RELATED"/>
    <property type="match status" value="1"/>
</dbReference>
<dbReference type="Pfam" id="PF00156">
    <property type="entry name" value="Pribosyltran"/>
    <property type="match status" value="1"/>
</dbReference>
<dbReference type="SUPFAM" id="SSF53271">
    <property type="entry name" value="PRTase-like"/>
    <property type="match status" value="1"/>
</dbReference>
<dbReference type="PROSITE" id="PS00103">
    <property type="entry name" value="PUR_PYR_PR_TRANSFER"/>
    <property type="match status" value="1"/>
</dbReference>